<sequence length="522" mass="58788">MNANVPSDANCRRIICDGEYATVRYVGNVPPTPGLWLGVEWDNHLRGKHNGTHEGTKYFTCSHPTGGSFIRLKKANFGVDFLAALRKRYGLKSEQNEELVIGKKTVELVGFESIQEEQSKLNKLKDVSLRECAVSNAGEKGQICHSCPNIMTADLSKNLFSSWESLAHISSQLENLTSLDLSENKLNPSSNPSSLATSFCNLKVLSLNRTGMKWNEILQCASMWPALEELHLVSNDISLLEQPVNNLQNLTILDISNNKIVDGNQLHTIAFLPRLKQVIVSNNIISSISFPDVDFGHTAMFISLTSLAVNGNNISEWCVINELHKLLHLESLNCHGNPLMDLDKNPETVRQLIIAKIENLKFLNKTEIFPTERRGAELDYRKMFGNEWLKAGGSQNEEFNKPSRDFLQDHPRYSALIKKYGAPDEGELKQQQPFALKNQLLTLTIQCPEKPDKKPIQKKLPDSMTVQKVKGLLYRLLKVPGSDLKLSYQSSKMEGKEIELENDLKPLQFYSVENGDCLLVRW</sequence>
<protein>
    <recommendedName>
        <fullName>Tubulin-specific chaperone E</fullName>
    </recommendedName>
    <alternativeName>
        <fullName>Tubulin-folding cofactor E</fullName>
    </alternativeName>
</protein>
<gene>
    <name type="primary">tbce</name>
</gene>
<accession>Q5U508</accession>
<proteinExistence type="evidence at transcript level"/>
<organism>
    <name type="scientific">Xenopus laevis</name>
    <name type="common">African clawed frog</name>
    <dbReference type="NCBI Taxonomy" id="8355"/>
    <lineage>
        <taxon>Eukaryota</taxon>
        <taxon>Metazoa</taxon>
        <taxon>Chordata</taxon>
        <taxon>Craniata</taxon>
        <taxon>Vertebrata</taxon>
        <taxon>Euteleostomi</taxon>
        <taxon>Amphibia</taxon>
        <taxon>Batrachia</taxon>
        <taxon>Anura</taxon>
        <taxon>Pipoidea</taxon>
        <taxon>Pipidae</taxon>
        <taxon>Xenopodinae</taxon>
        <taxon>Xenopus</taxon>
        <taxon>Xenopus</taxon>
    </lineage>
</organism>
<reference key="1">
    <citation type="submission" date="2004-10" db="EMBL/GenBank/DDBJ databases">
        <authorList>
            <consortium name="NIH - Xenopus Gene Collection (XGC) project"/>
        </authorList>
    </citation>
    <scope>NUCLEOTIDE SEQUENCE [LARGE SCALE MRNA]</scope>
    <source>
        <tissue>Eye</tissue>
    </source>
</reference>
<dbReference type="EMBL" id="BC084879">
    <property type="protein sequence ID" value="AAH84879.1"/>
    <property type="molecule type" value="mRNA"/>
</dbReference>
<dbReference type="RefSeq" id="NP_001088530.1">
    <property type="nucleotide sequence ID" value="NM_001095061.1"/>
</dbReference>
<dbReference type="RefSeq" id="XP_018117527.1">
    <property type="nucleotide sequence ID" value="XM_018262038.1"/>
</dbReference>
<dbReference type="SMR" id="Q5U508"/>
<dbReference type="DNASU" id="495403"/>
<dbReference type="GeneID" id="495403"/>
<dbReference type="KEGG" id="xla:495403"/>
<dbReference type="AGR" id="Xenbase:XB-GENE-865843"/>
<dbReference type="CTD" id="495403"/>
<dbReference type="Xenbase" id="XB-GENE-865843">
    <property type="gene designation" value="tbce.L"/>
</dbReference>
<dbReference type="OMA" id="SEESHMF"/>
<dbReference type="OrthoDB" id="5273213at2759"/>
<dbReference type="Proteomes" id="UP000186698">
    <property type="component" value="Chromosome 5L"/>
</dbReference>
<dbReference type="Bgee" id="495403">
    <property type="expression patterns" value="Expressed in zone of skin and 19 other cell types or tissues"/>
</dbReference>
<dbReference type="GO" id="GO:0005737">
    <property type="term" value="C:cytoplasm"/>
    <property type="evidence" value="ECO:0007669"/>
    <property type="project" value="UniProtKB-SubCell"/>
</dbReference>
<dbReference type="GO" id="GO:0005856">
    <property type="term" value="C:cytoskeleton"/>
    <property type="evidence" value="ECO:0007669"/>
    <property type="project" value="UniProtKB-SubCell"/>
</dbReference>
<dbReference type="GO" id="GO:0007010">
    <property type="term" value="P:cytoskeleton organization"/>
    <property type="evidence" value="ECO:0007669"/>
    <property type="project" value="TreeGrafter"/>
</dbReference>
<dbReference type="GO" id="GO:0007023">
    <property type="term" value="P:post-chaperonin tubulin folding pathway"/>
    <property type="evidence" value="ECO:0000250"/>
    <property type="project" value="UniProtKB"/>
</dbReference>
<dbReference type="CDD" id="cd17044">
    <property type="entry name" value="Ubl_TBCE"/>
    <property type="match status" value="1"/>
</dbReference>
<dbReference type="FunFam" id="2.30.30.190:FF:000008">
    <property type="entry name" value="Tubulin-specific chaperone E"/>
    <property type="match status" value="1"/>
</dbReference>
<dbReference type="FunFam" id="3.10.20.90:FF:000173">
    <property type="entry name" value="Tubulin-specific chaperone E"/>
    <property type="match status" value="1"/>
</dbReference>
<dbReference type="FunFam" id="3.80.10.10:FF:001017">
    <property type="entry name" value="Tubulin-specific chaperone E"/>
    <property type="match status" value="1"/>
</dbReference>
<dbReference type="Gene3D" id="2.30.30.190">
    <property type="entry name" value="CAP Gly-rich-like domain"/>
    <property type="match status" value="1"/>
</dbReference>
<dbReference type="Gene3D" id="3.10.20.90">
    <property type="entry name" value="Phosphatidylinositol 3-kinase Catalytic Subunit, Chain A, domain 1"/>
    <property type="match status" value="1"/>
</dbReference>
<dbReference type="Gene3D" id="3.80.10.10">
    <property type="entry name" value="Ribonuclease Inhibitor"/>
    <property type="match status" value="2"/>
</dbReference>
<dbReference type="InterPro" id="IPR036859">
    <property type="entry name" value="CAP-Gly_dom_sf"/>
</dbReference>
<dbReference type="InterPro" id="IPR000938">
    <property type="entry name" value="CAP-Gly_domain"/>
</dbReference>
<dbReference type="InterPro" id="IPR032675">
    <property type="entry name" value="LRR_dom_sf"/>
</dbReference>
<dbReference type="InterPro" id="IPR000626">
    <property type="entry name" value="Ubiquitin-like_dom"/>
</dbReference>
<dbReference type="InterPro" id="IPR029071">
    <property type="entry name" value="Ubiquitin-like_domsf"/>
</dbReference>
<dbReference type="InterPro" id="IPR044079">
    <property type="entry name" value="Ubl_TBCE"/>
</dbReference>
<dbReference type="PANTHER" id="PTHR18849:SF0">
    <property type="entry name" value="CILIA- AND FLAGELLA-ASSOCIATED PROTEIN 410-RELATED"/>
    <property type="match status" value="1"/>
</dbReference>
<dbReference type="PANTHER" id="PTHR18849">
    <property type="entry name" value="LEUCINE RICH REPEAT PROTEIN"/>
    <property type="match status" value="1"/>
</dbReference>
<dbReference type="Pfam" id="PF01302">
    <property type="entry name" value="CAP_GLY"/>
    <property type="match status" value="1"/>
</dbReference>
<dbReference type="Pfam" id="PF14580">
    <property type="entry name" value="LRR_9"/>
    <property type="match status" value="1"/>
</dbReference>
<dbReference type="Pfam" id="PF14560">
    <property type="entry name" value="Ubiquitin_2"/>
    <property type="match status" value="1"/>
</dbReference>
<dbReference type="PRINTS" id="PR00019">
    <property type="entry name" value="LEURICHRPT"/>
</dbReference>
<dbReference type="SMART" id="SM01052">
    <property type="entry name" value="CAP_GLY"/>
    <property type="match status" value="1"/>
</dbReference>
<dbReference type="SMART" id="SM00365">
    <property type="entry name" value="LRR_SD22"/>
    <property type="match status" value="2"/>
</dbReference>
<dbReference type="SUPFAM" id="SSF74924">
    <property type="entry name" value="Cap-Gly domain"/>
    <property type="match status" value="1"/>
</dbReference>
<dbReference type="SUPFAM" id="SSF52058">
    <property type="entry name" value="L domain-like"/>
    <property type="match status" value="1"/>
</dbReference>
<dbReference type="SUPFAM" id="SSF54236">
    <property type="entry name" value="Ubiquitin-like"/>
    <property type="match status" value="1"/>
</dbReference>
<dbReference type="PROSITE" id="PS00845">
    <property type="entry name" value="CAP_GLY_1"/>
    <property type="match status" value="1"/>
</dbReference>
<dbReference type="PROSITE" id="PS50245">
    <property type="entry name" value="CAP_GLY_2"/>
    <property type="match status" value="1"/>
</dbReference>
<name>TBCE_XENLA</name>
<evidence type="ECO:0000250" key="1"/>
<evidence type="ECO:0000255" key="2">
    <source>
        <dbReference type="PROSITE-ProRule" id="PRU00045"/>
    </source>
</evidence>
<evidence type="ECO:0000305" key="3"/>
<comment type="function">
    <text>Tubulin-folding protein; involved in the second step of the tubulin folding pathway.</text>
</comment>
<comment type="subunit">
    <text>Supercomplex made of cofactors A to E. Cofactors A and D function by capturing and stabilizing tubulin in a quasi-native conformation. Cofactor E binds to the cofactor D-tubulin complex; interaction with cofactor C then causes the release of tubulin polypeptides that are committed to the native state.</text>
</comment>
<comment type="subcellular location">
    <subcellularLocation>
        <location evidence="1">Cytoplasm</location>
    </subcellularLocation>
    <subcellularLocation>
        <location evidence="1">Cytoplasm</location>
        <location evidence="1">Cytoskeleton</location>
    </subcellularLocation>
</comment>
<comment type="similarity">
    <text evidence="3">Belongs to the TBCE family.</text>
</comment>
<keyword id="KW-0143">Chaperone</keyword>
<keyword id="KW-0963">Cytoplasm</keyword>
<keyword id="KW-0206">Cytoskeleton</keyword>
<keyword id="KW-0433">Leucine-rich repeat</keyword>
<keyword id="KW-1185">Reference proteome</keyword>
<keyword id="KW-0677">Repeat</keyword>
<feature type="chain" id="PRO_0000083543" description="Tubulin-specific chaperone E">
    <location>
        <begin position="1"/>
        <end position="522"/>
    </location>
</feature>
<feature type="domain" description="CAP-Gly" evidence="2">
    <location>
        <begin position="27"/>
        <end position="71"/>
    </location>
</feature>
<feature type="repeat" description="LRR 1">
    <location>
        <begin position="149"/>
        <end position="170"/>
    </location>
</feature>
<feature type="repeat" description="LRR 2">
    <location>
        <begin position="175"/>
        <end position="196"/>
    </location>
</feature>
<feature type="repeat" description="LRR 3">
    <location>
        <begin position="201"/>
        <end position="222"/>
    </location>
</feature>
<feature type="repeat" description="LRR 4">
    <location>
        <begin position="226"/>
        <end position="248"/>
    </location>
</feature>
<feature type="repeat" description="LRR 5">
    <location>
        <begin position="249"/>
        <end position="270"/>
    </location>
</feature>
<feature type="repeat" description="LRR 6">
    <location>
        <begin position="274"/>
        <end position="295"/>
    </location>
</feature>
<feature type="repeat" description="LRR 7">
    <location>
        <begin position="303"/>
        <end position="324"/>
    </location>
</feature>
<feature type="domain" description="LRRCT">
    <location>
        <begin position="337"/>
        <end position="379"/>
    </location>
</feature>